<organism>
    <name type="scientific">Burkholderia orbicola (strain AU 1054)</name>
    <dbReference type="NCBI Taxonomy" id="331271"/>
    <lineage>
        <taxon>Bacteria</taxon>
        <taxon>Pseudomonadati</taxon>
        <taxon>Pseudomonadota</taxon>
        <taxon>Betaproteobacteria</taxon>
        <taxon>Burkholderiales</taxon>
        <taxon>Burkholderiaceae</taxon>
        <taxon>Burkholderia</taxon>
        <taxon>Burkholderia cepacia complex</taxon>
        <taxon>Burkholderia orbicola</taxon>
    </lineage>
</organism>
<comment type="function">
    <text evidence="1">Catalyzes the transfer of an acyl group from acyl-phosphate (acyl-PO(4)) to glycerol-3-phosphate (G3P) to form lysophosphatidic acid (LPA). This enzyme utilizes acyl-phosphate as fatty acyl donor, but not acyl-CoA or acyl-ACP.</text>
</comment>
<comment type="catalytic activity">
    <reaction evidence="1">
        <text>an acyl phosphate + sn-glycerol 3-phosphate = a 1-acyl-sn-glycero-3-phosphate + phosphate</text>
        <dbReference type="Rhea" id="RHEA:34075"/>
        <dbReference type="ChEBI" id="CHEBI:43474"/>
        <dbReference type="ChEBI" id="CHEBI:57597"/>
        <dbReference type="ChEBI" id="CHEBI:57970"/>
        <dbReference type="ChEBI" id="CHEBI:59918"/>
        <dbReference type="EC" id="2.3.1.275"/>
    </reaction>
</comment>
<comment type="pathway">
    <text evidence="1">Lipid metabolism; phospholipid metabolism.</text>
</comment>
<comment type="subunit">
    <text evidence="1">Probably interacts with PlsX.</text>
</comment>
<comment type="subcellular location">
    <subcellularLocation>
        <location evidence="1">Cell inner membrane</location>
        <topology evidence="1">Multi-pass membrane protein</topology>
    </subcellularLocation>
</comment>
<comment type="similarity">
    <text evidence="1">Belongs to the PlsY family.</text>
</comment>
<name>PLSY_BURO1</name>
<gene>
    <name evidence="1" type="primary">plsY</name>
    <name type="ordered locus">Bcen_1945</name>
</gene>
<proteinExistence type="inferred from homology"/>
<feature type="chain" id="PRO_0000250288" description="Glycerol-3-phosphate acyltransferase">
    <location>
        <begin position="1"/>
        <end position="213"/>
    </location>
</feature>
<feature type="transmembrane region" description="Helical" evidence="1">
    <location>
        <begin position="3"/>
        <end position="23"/>
    </location>
</feature>
<feature type="transmembrane region" description="Helical" evidence="1">
    <location>
        <begin position="51"/>
        <end position="71"/>
    </location>
</feature>
<feature type="transmembrane region" description="Helical" evidence="1">
    <location>
        <begin position="78"/>
        <end position="98"/>
    </location>
</feature>
<feature type="transmembrane region" description="Helical" evidence="1">
    <location>
        <begin position="115"/>
        <end position="135"/>
    </location>
</feature>
<feature type="transmembrane region" description="Helical" evidence="1">
    <location>
        <begin position="140"/>
        <end position="160"/>
    </location>
</feature>
<accession>Q1BU57</accession>
<sequence length="213" mass="22358">MQILLAALVAYLIGSVSFAVVVSSVMGLADPRSYGSKNPGATNVLRSGNKKAAILTLVGDAFKGWIAVWLARHFGLPDVAIAWVAIAVFLGHLYPVFFRFQGGKGVATAAGVLLAVHPVLGLATALTWLIVAFFFRYSSLAALVAAVFAPVFDVFLFGMPGHNPIAWAVLAMSVLLVWRHRGNISKLLAGQESRIGDKKKAAADGGAQDGGKA</sequence>
<protein>
    <recommendedName>
        <fullName evidence="1">Glycerol-3-phosphate acyltransferase</fullName>
    </recommendedName>
    <alternativeName>
        <fullName evidence="1">Acyl-PO4 G3P acyltransferase</fullName>
    </alternativeName>
    <alternativeName>
        <fullName evidence="1">Acyl-phosphate--glycerol-3-phosphate acyltransferase</fullName>
    </alternativeName>
    <alternativeName>
        <fullName evidence="1">G3P acyltransferase</fullName>
        <shortName evidence="1">GPAT</shortName>
        <ecNumber evidence="1">2.3.1.275</ecNumber>
    </alternativeName>
    <alternativeName>
        <fullName evidence="1">Lysophosphatidic acid synthase</fullName>
        <shortName evidence="1">LPA synthase</shortName>
    </alternativeName>
</protein>
<evidence type="ECO:0000255" key="1">
    <source>
        <dbReference type="HAMAP-Rule" id="MF_01043"/>
    </source>
</evidence>
<dbReference type="EC" id="2.3.1.275" evidence="1"/>
<dbReference type="EMBL" id="CP000378">
    <property type="protein sequence ID" value="ABF76848.1"/>
    <property type="molecule type" value="Genomic_DNA"/>
</dbReference>
<dbReference type="SMR" id="Q1BU57"/>
<dbReference type="HOGENOM" id="CLU_081254_0_0_4"/>
<dbReference type="UniPathway" id="UPA00085"/>
<dbReference type="GO" id="GO:0005886">
    <property type="term" value="C:plasma membrane"/>
    <property type="evidence" value="ECO:0007669"/>
    <property type="project" value="UniProtKB-SubCell"/>
</dbReference>
<dbReference type="GO" id="GO:0043772">
    <property type="term" value="F:acyl-phosphate glycerol-3-phosphate acyltransferase activity"/>
    <property type="evidence" value="ECO:0007669"/>
    <property type="project" value="UniProtKB-UniRule"/>
</dbReference>
<dbReference type="GO" id="GO:0008654">
    <property type="term" value="P:phospholipid biosynthetic process"/>
    <property type="evidence" value="ECO:0007669"/>
    <property type="project" value="UniProtKB-UniRule"/>
</dbReference>
<dbReference type="HAMAP" id="MF_01043">
    <property type="entry name" value="PlsY"/>
    <property type="match status" value="1"/>
</dbReference>
<dbReference type="InterPro" id="IPR003811">
    <property type="entry name" value="G3P_acylTferase_PlsY"/>
</dbReference>
<dbReference type="NCBIfam" id="TIGR00023">
    <property type="entry name" value="glycerol-3-phosphate 1-O-acyltransferase PlsY"/>
    <property type="match status" value="1"/>
</dbReference>
<dbReference type="PANTHER" id="PTHR30309:SF0">
    <property type="entry name" value="GLYCEROL-3-PHOSPHATE ACYLTRANSFERASE-RELATED"/>
    <property type="match status" value="1"/>
</dbReference>
<dbReference type="PANTHER" id="PTHR30309">
    <property type="entry name" value="INNER MEMBRANE PROTEIN YGIH"/>
    <property type="match status" value="1"/>
</dbReference>
<dbReference type="Pfam" id="PF02660">
    <property type="entry name" value="G3P_acyltransf"/>
    <property type="match status" value="1"/>
</dbReference>
<dbReference type="SMART" id="SM01207">
    <property type="entry name" value="G3P_acyltransf"/>
    <property type="match status" value="1"/>
</dbReference>
<keyword id="KW-0997">Cell inner membrane</keyword>
<keyword id="KW-1003">Cell membrane</keyword>
<keyword id="KW-0444">Lipid biosynthesis</keyword>
<keyword id="KW-0443">Lipid metabolism</keyword>
<keyword id="KW-0472">Membrane</keyword>
<keyword id="KW-0594">Phospholipid biosynthesis</keyword>
<keyword id="KW-1208">Phospholipid metabolism</keyword>
<keyword id="KW-0808">Transferase</keyword>
<keyword id="KW-0812">Transmembrane</keyword>
<keyword id="KW-1133">Transmembrane helix</keyword>
<reference key="1">
    <citation type="submission" date="2006-05" db="EMBL/GenBank/DDBJ databases">
        <title>Complete sequence of chromosome 1 of Burkholderia cenocepacia AU 1054.</title>
        <authorList>
            <consortium name="US DOE Joint Genome Institute"/>
            <person name="Copeland A."/>
            <person name="Lucas S."/>
            <person name="Lapidus A."/>
            <person name="Barry K."/>
            <person name="Detter J.C."/>
            <person name="Glavina del Rio T."/>
            <person name="Hammon N."/>
            <person name="Israni S."/>
            <person name="Dalin E."/>
            <person name="Tice H."/>
            <person name="Pitluck S."/>
            <person name="Chain P."/>
            <person name="Malfatti S."/>
            <person name="Shin M."/>
            <person name="Vergez L."/>
            <person name="Schmutz J."/>
            <person name="Larimer F."/>
            <person name="Land M."/>
            <person name="Hauser L."/>
            <person name="Kyrpides N."/>
            <person name="Lykidis A."/>
            <person name="LiPuma J.J."/>
            <person name="Konstantinidis K."/>
            <person name="Tiedje J.M."/>
            <person name="Richardson P."/>
        </authorList>
    </citation>
    <scope>NUCLEOTIDE SEQUENCE [LARGE SCALE GENOMIC DNA]</scope>
    <source>
        <strain>AU 1054</strain>
    </source>
</reference>